<keyword id="KW-0963">Cytoplasm</keyword>
<keyword id="KW-0489">Methyltransferase</keyword>
<keyword id="KW-0949">S-adenosyl-L-methionine</keyword>
<keyword id="KW-0808">Transferase</keyword>
<keyword id="KW-0819">tRNA processing</keyword>
<reference key="1">
    <citation type="journal article" date="2008" name="Genome Res.">
        <title>Comparative genome analysis of Salmonella enteritidis PT4 and Salmonella gallinarum 287/91 provides insights into evolutionary and host adaptation pathways.</title>
        <authorList>
            <person name="Thomson N.R."/>
            <person name="Clayton D.J."/>
            <person name="Windhorst D."/>
            <person name="Vernikos G."/>
            <person name="Davidson S."/>
            <person name="Churcher C."/>
            <person name="Quail M.A."/>
            <person name="Stevens M."/>
            <person name="Jones M.A."/>
            <person name="Watson M."/>
            <person name="Barron A."/>
            <person name="Layton A."/>
            <person name="Pickard D."/>
            <person name="Kingsley R.A."/>
            <person name="Bignell A."/>
            <person name="Clark L."/>
            <person name="Harris B."/>
            <person name="Ormond D."/>
            <person name="Abdellah Z."/>
            <person name="Brooks K."/>
            <person name="Cherevach I."/>
            <person name="Chillingworth T."/>
            <person name="Woodward J."/>
            <person name="Norberczak H."/>
            <person name="Lord A."/>
            <person name="Arrowsmith C."/>
            <person name="Jagels K."/>
            <person name="Moule S."/>
            <person name="Mungall K."/>
            <person name="Saunders M."/>
            <person name="Whitehead S."/>
            <person name="Chabalgoity J.A."/>
            <person name="Maskell D."/>
            <person name="Humphreys T."/>
            <person name="Roberts M."/>
            <person name="Barrow P.A."/>
            <person name="Dougan G."/>
            <person name="Parkhill J."/>
        </authorList>
    </citation>
    <scope>NUCLEOTIDE SEQUENCE [LARGE SCALE GENOMIC DNA]</scope>
    <source>
        <strain>P125109</strain>
    </source>
</reference>
<evidence type="ECO:0000255" key="1">
    <source>
        <dbReference type="HAMAP-Rule" id="MF_00605"/>
    </source>
</evidence>
<name>TRMD_SALEP</name>
<dbReference type="EC" id="2.1.1.228" evidence="1"/>
<dbReference type="EMBL" id="AM933172">
    <property type="protein sequence ID" value="CAR34177.1"/>
    <property type="molecule type" value="Genomic_DNA"/>
</dbReference>
<dbReference type="RefSeq" id="WP_000469804.1">
    <property type="nucleotide sequence ID" value="NC_011294.1"/>
</dbReference>
<dbReference type="SMR" id="B5QUG2"/>
<dbReference type="KEGG" id="set:SEN2595"/>
<dbReference type="HOGENOM" id="CLU_047363_0_1_6"/>
<dbReference type="Proteomes" id="UP000000613">
    <property type="component" value="Chromosome"/>
</dbReference>
<dbReference type="GO" id="GO:0005829">
    <property type="term" value="C:cytosol"/>
    <property type="evidence" value="ECO:0007669"/>
    <property type="project" value="TreeGrafter"/>
</dbReference>
<dbReference type="GO" id="GO:0052906">
    <property type="term" value="F:tRNA (guanine(37)-N1)-methyltransferase activity"/>
    <property type="evidence" value="ECO:0007669"/>
    <property type="project" value="UniProtKB-UniRule"/>
</dbReference>
<dbReference type="GO" id="GO:0002939">
    <property type="term" value="P:tRNA N1-guanine methylation"/>
    <property type="evidence" value="ECO:0007669"/>
    <property type="project" value="TreeGrafter"/>
</dbReference>
<dbReference type="CDD" id="cd18080">
    <property type="entry name" value="TrmD-like"/>
    <property type="match status" value="1"/>
</dbReference>
<dbReference type="FunFam" id="1.10.1270.20:FF:000001">
    <property type="entry name" value="tRNA (guanine-N(1)-)-methyltransferase"/>
    <property type="match status" value="1"/>
</dbReference>
<dbReference type="FunFam" id="3.40.1280.10:FF:000001">
    <property type="entry name" value="tRNA (guanine-N(1)-)-methyltransferase"/>
    <property type="match status" value="1"/>
</dbReference>
<dbReference type="Gene3D" id="3.40.1280.10">
    <property type="match status" value="1"/>
</dbReference>
<dbReference type="Gene3D" id="1.10.1270.20">
    <property type="entry name" value="tRNA(m1g37)methyltransferase, domain 2"/>
    <property type="match status" value="1"/>
</dbReference>
<dbReference type="HAMAP" id="MF_00605">
    <property type="entry name" value="TrmD"/>
    <property type="match status" value="1"/>
</dbReference>
<dbReference type="InterPro" id="IPR029028">
    <property type="entry name" value="Alpha/beta_knot_MTases"/>
</dbReference>
<dbReference type="InterPro" id="IPR023148">
    <property type="entry name" value="tRNA_m1G_MeTrfase_C_sf"/>
</dbReference>
<dbReference type="InterPro" id="IPR002649">
    <property type="entry name" value="tRNA_m1G_MeTrfase_TrmD"/>
</dbReference>
<dbReference type="InterPro" id="IPR029026">
    <property type="entry name" value="tRNA_m1G_MTases_N"/>
</dbReference>
<dbReference type="InterPro" id="IPR016009">
    <property type="entry name" value="tRNA_MeTrfase_TRMD/TRM10"/>
</dbReference>
<dbReference type="NCBIfam" id="NF000648">
    <property type="entry name" value="PRK00026.1"/>
    <property type="match status" value="1"/>
</dbReference>
<dbReference type="NCBIfam" id="TIGR00088">
    <property type="entry name" value="trmD"/>
    <property type="match status" value="1"/>
</dbReference>
<dbReference type="PANTHER" id="PTHR46417">
    <property type="entry name" value="TRNA (GUANINE-N(1)-)-METHYLTRANSFERASE"/>
    <property type="match status" value="1"/>
</dbReference>
<dbReference type="PANTHER" id="PTHR46417:SF1">
    <property type="entry name" value="TRNA (GUANINE-N(1)-)-METHYLTRANSFERASE"/>
    <property type="match status" value="1"/>
</dbReference>
<dbReference type="Pfam" id="PF01746">
    <property type="entry name" value="tRNA_m1G_MT"/>
    <property type="match status" value="1"/>
</dbReference>
<dbReference type="PIRSF" id="PIRSF000386">
    <property type="entry name" value="tRNA_mtase"/>
    <property type="match status" value="1"/>
</dbReference>
<dbReference type="SUPFAM" id="SSF75217">
    <property type="entry name" value="alpha/beta knot"/>
    <property type="match status" value="1"/>
</dbReference>
<feature type="chain" id="PRO_1000130202" description="tRNA (guanine-N(1)-)-methyltransferase">
    <location>
        <begin position="1"/>
        <end position="255"/>
    </location>
</feature>
<feature type="binding site" evidence="1">
    <location>
        <position position="113"/>
    </location>
    <ligand>
        <name>S-adenosyl-L-methionine</name>
        <dbReference type="ChEBI" id="CHEBI:59789"/>
    </ligand>
</feature>
<feature type="binding site" evidence="1">
    <location>
        <begin position="133"/>
        <end position="138"/>
    </location>
    <ligand>
        <name>S-adenosyl-L-methionine</name>
        <dbReference type="ChEBI" id="CHEBI:59789"/>
    </ligand>
</feature>
<sequence>MFIGIVSLFPEMFRAITDYGVTGRAVKKGLLNIQSWSPRDFAHDRHRTVDDRPYGGGPGMLMMVQPLRDAIHAAKAAAGEGAKVIYLSPQGRKLDQAGVSELATNQKLILVCGRYEGVDERVIQTEIDEEWSIGDYVLSGGELPAMTLIDSVARFIPGVLGHEASAIEDSFADGLLDCPHYTRPEVLEGMEVPPVLLSGNHAEIRRWRLKQSLGRTWLRRPELLENLALTEEQARLLAEFKTEHAQQQHKHDGMA</sequence>
<organism>
    <name type="scientific">Salmonella enteritidis PT4 (strain P125109)</name>
    <dbReference type="NCBI Taxonomy" id="550537"/>
    <lineage>
        <taxon>Bacteria</taxon>
        <taxon>Pseudomonadati</taxon>
        <taxon>Pseudomonadota</taxon>
        <taxon>Gammaproteobacteria</taxon>
        <taxon>Enterobacterales</taxon>
        <taxon>Enterobacteriaceae</taxon>
        <taxon>Salmonella</taxon>
    </lineage>
</organism>
<comment type="function">
    <text evidence="1">Specifically methylates guanosine-37 in various tRNAs.</text>
</comment>
<comment type="catalytic activity">
    <reaction evidence="1">
        <text>guanosine(37) in tRNA + S-adenosyl-L-methionine = N(1)-methylguanosine(37) in tRNA + S-adenosyl-L-homocysteine + H(+)</text>
        <dbReference type="Rhea" id="RHEA:36899"/>
        <dbReference type="Rhea" id="RHEA-COMP:10145"/>
        <dbReference type="Rhea" id="RHEA-COMP:10147"/>
        <dbReference type="ChEBI" id="CHEBI:15378"/>
        <dbReference type="ChEBI" id="CHEBI:57856"/>
        <dbReference type="ChEBI" id="CHEBI:59789"/>
        <dbReference type="ChEBI" id="CHEBI:73542"/>
        <dbReference type="ChEBI" id="CHEBI:74269"/>
        <dbReference type="EC" id="2.1.1.228"/>
    </reaction>
</comment>
<comment type="subunit">
    <text evidence="1">Homodimer.</text>
</comment>
<comment type="subcellular location">
    <subcellularLocation>
        <location evidence="1">Cytoplasm</location>
    </subcellularLocation>
</comment>
<comment type="similarity">
    <text evidence="1">Belongs to the RNA methyltransferase TrmD family.</text>
</comment>
<gene>
    <name evidence="1" type="primary">trmD</name>
    <name type="ordered locus">SEN2595</name>
</gene>
<accession>B5QUG2</accession>
<protein>
    <recommendedName>
        <fullName evidence="1">tRNA (guanine-N(1)-)-methyltransferase</fullName>
        <ecNumber evidence="1">2.1.1.228</ecNumber>
    </recommendedName>
    <alternativeName>
        <fullName evidence="1">M1G-methyltransferase</fullName>
    </alternativeName>
    <alternativeName>
        <fullName evidence="1">tRNA [GM37] methyltransferase</fullName>
    </alternativeName>
</protein>
<proteinExistence type="inferred from homology"/>